<sequence length="309" mass="35005">MNSPDIALIKTYLLTLQDNICAALAQADGHAEFTEECWVREEGGGGRSRVLVNGAVFEQAGVNFSHVSGAMLPASATAHRPELAGRSFQALGVSLVIHPLNPYLPTSHANVRFFIAEKPGEDAVWWFGGGFDLTPYYGFEEDAIHWHQVAHSLCQPFGEQIYPRYKKWCDDYFYIKHRQEARGIGGLFFDDLNSPDFMTCFNFTQAVGDGFLAAYMPIVARRKALGWGDRERQFQLYRRGRYVEFNLVWDRGTLFGLQTGGRTESILMSLPPLVRWEYNYQPEADSAEAALYRDFLPVKDWLAIKGETH</sequence>
<comment type="function">
    <text evidence="1">Involved in the heme biosynthesis. Catalyzes the aerobic oxidative decarboxylation of propionate groups of rings A and B of coproporphyrinogen-III to yield the vinyl groups in protoporphyrinogen-IX.</text>
</comment>
<comment type="catalytic activity">
    <reaction evidence="1">
        <text>coproporphyrinogen III + O2 + 2 H(+) = protoporphyrinogen IX + 2 CO2 + 2 H2O</text>
        <dbReference type="Rhea" id="RHEA:18257"/>
        <dbReference type="ChEBI" id="CHEBI:15377"/>
        <dbReference type="ChEBI" id="CHEBI:15378"/>
        <dbReference type="ChEBI" id="CHEBI:15379"/>
        <dbReference type="ChEBI" id="CHEBI:16526"/>
        <dbReference type="ChEBI" id="CHEBI:57307"/>
        <dbReference type="ChEBI" id="CHEBI:57309"/>
        <dbReference type="EC" id="1.3.3.3"/>
    </reaction>
</comment>
<comment type="cofactor">
    <cofactor evidence="1">
        <name>a divalent metal cation</name>
        <dbReference type="ChEBI" id="CHEBI:60240"/>
    </cofactor>
</comment>
<comment type="pathway">
    <text evidence="1">Porphyrin-containing compound metabolism; protoporphyrin-IX biosynthesis; protoporphyrinogen-IX from coproporphyrinogen-III (O2 route): step 1/1.</text>
</comment>
<comment type="subunit">
    <text evidence="1">Homodimer.</text>
</comment>
<comment type="subcellular location">
    <subcellularLocation>
        <location evidence="1">Cytoplasm</location>
    </subcellularLocation>
</comment>
<comment type="similarity">
    <text evidence="1">Belongs to the aerobic coproporphyrinogen-III oxidase family.</text>
</comment>
<keyword id="KW-0963">Cytoplasm</keyword>
<keyword id="KW-0350">Heme biosynthesis</keyword>
<keyword id="KW-0479">Metal-binding</keyword>
<keyword id="KW-0560">Oxidoreductase</keyword>
<keyword id="KW-0627">Porphyrin biosynthesis</keyword>
<reference key="1">
    <citation type="journal article" date="2006" name="J. Bacteriol.">
        <title>Complete genome sequence of Yersinia pestis strains Antiqua and Nepal516: evidence of gene reduction in an emerging pathogen.</title>
        <authorList>
            <person name="Chain P.S.G."/>
            <person name="Hu P."/>
            <person name="Malfatti S.A."/>
            <person name="Radnedge L."/>
            <person name="Larimer F."/>
            <person name="Vergez L.M."/>
            <person name="Worsham P."/>
            <person name="Chu M.C."/>
            <person name="Andersen G.L."/>
        </authorList>
    </citation>
    <scope>NUCLEOTIDE SEQUENCE [LARGE SCALE GENOMIC DNA]</scope>
    <source>
        <strain>Antiqua</strain>
    </source>
</reference>
<dbReference type="EC" id="1.3.3.3" evidence="1"/>
<dbReference type="EMBL" id="CP000308">
    <property type="protein sequence ID" value="ABG14185.1"/>
    <property type="molecule type" value="Genomic_DNA"/>
</dbReference>
<dbReference type="RefSeq" id="WP_002208526.1">
    <property type="nucleotide sequence ID" value="NZ_CP009906.1"/>
</dbReference>
<dbReference type="SMR" id="Q1C5T7"/>
<dbReference type="GeneID" id="57975670"/>
<dbReference type="KEGG" id="ypa:YPA_2220"/>
<dbReference type="UniPathway" id="UPA00251">
    <property type="reaction ID" value="UER00322"/>
</dbReference>
<dbReference type="Proteomes" id="UP000001971">
    <property type="component" value="Chromosome"/>
</dbReference>
<dbReference type="GO" id="GO:0005737">
    <property type="term" value="C:cytoplasm"/>
    <property type="evidence" value="ECO:0007669"/>
    <property type="project" value="UniProtKB-SubCell"/>
</dbReference>
<dbReference type="GO" id="GO:0004109">
    <property type="term" value="F:coproporphyrinogen oxidase activity"/>
    <property type="evidence" value="ECO:0007669"/>
    <property type="project" value="UniProtKB-UniRule"/>
</dbReference>
<dbReference type="GO" id="GO:0046872">
    <property type="term" value="F:metal ion binding"/>
    <property type="evidence" value="ECO:0007669"/>
    <property type="project" value="UniProtKB-KW"/>
</dbReference>
<dbReference type="GO" id="GO:0042803">
    <property type="term" value="F:protein homodimerization activity"/>
    <property type="evidence" value="ECO:0000250"/>
    <property type="project" value="UniProtKB"/>
</dbReference>
<dbReference type="GO" id="GO:0006782">
    <property type="term" value="P:protoporphyrinogen IX biosynthetic process"/>
    <property type="evidence" value="ECO:0007669"/>
    <property type="project" value="UniProtKB-UniRule"/>
</dbReference>
<dbReference type="FunFam" id="3.40.1500.10:FF:000001">
    <property type="entry name" value="Oxygen-dependent coproporphyrinogen-III oxidase"/>
    <property type="match status" value="1"/>
</dbReference>
<dbReference type="Gene3D" id="3.40.1500.10">
    <property type="entry name" value="Coproporphyrinogen III oxidase, aerobic"/>
    <property type="match status" value="1"/>
</dbReference>
<dbReference type="HAMAP" id="MF_00333">
    <property type="entry name" value="Coprogen_oxidas"/>
    <property type="match status" value="1"/>
</dbReference>
<dbReference type="InterPro" id="IPR001260">
    <property type="entry name" value="Coprogen_oxidase_aer"/>
</dbReference>
<dbReference type="InterPro" id="IPR036406">
    <property type="entry name" value="Coprogen_oxidase_aer_sf"/>
</dbReference>
<dbReference type="InterPro" id="IPR018375">
    <property type="entry name" value="Coprogen_oxidase_CS"/>
</dbReference>
<dbReference type="NCBIfam" id="NF003727">
    <property type="entry name" value="PRK05330.1"/>
    <property type="match status" value="1"/>
</dbReference>
<dbReference type="PANTHER" id="PTHR10755">
    <property type="entry name" value="COPROPORPHYRINOGEN III OXIDASE, MITOCHONDRIAL"/>
    <property type="match status" value="1"/>
</dbReference>
<dbReference type="PANTHER" id="PTHR10755:SF0">
    <property type="entry name" value="OXYGEN-DEPENDENT COPROPORPHYRINOGEN-III OXIDASE, MITOCHONDRIAL"/>
    <property type="match status" value="1"/>
</dbReference>
<dbReference type="Pfam" id="PF01218">
    <property type="entry name" value="Coprogen_oxidas"/>
    <property type="match status" value="1"/>
</dbReference>
<dbReference type="PIRSF" id="PIRSF000166">
    <property type="entry name" value="Coproporphyri_ox"/>
    <property type="match status" value="1"/>
</dbReference>
<dbReference type="PRINTS" id="PR00073">
    <property type="entry name" value="COPRGNOXDASE"/>
</dbReference>
<dbReference type="SUPFAM" id="SSF102886">
    <property type="entry name" value="Coproporphyrinogen III oxidase"/>
    <property type="match status" value="1"/>
</dbReference>
<dbReference type="PROSITE" id="PS01021">
    <property type="entry name" value="COPROGEN_OXIDASE"/>
    <property type="match status" value="1"/>
</dbReference>
<feature type="chain" id="PRO_1000019517" description="Oxygen-dependent coproporphyrinogen-III oxidase">
    <location>
        <begin position="1"/>
        <end position="309"/>
    </location>
</feature>
<feature type="region of interest" description="Important for dimerization" evidence="1">
    <location>
        <begin position="242"/>
        <end position="277"/>
    </location>
</feature>
<feature type="active site" description="Proton donor" evidence="1">
    <location>
        <position position="108"/>
    </location>
</feature>
<feature type="binding site" evidence="1">
    <location>
        <position position="94"/>
    </location>
    <ligand>
        <name>substrate</name>
    </ligand>
</feature>
<feature type="binding site" evidence="1">
    <location>
        <position position="98"/>
    </location>
    <ligand>
        <name>a divalent metal cation</name>
        <dbReference type="ChEBI" id="CHEBI:60240"/>
    </ligand>
</feature>
<feature type="binding site" evidence="1">
    <location>
        <position position="108"/>
    </location>
    <ligand>
        <name>a divalent metal cation</name>
        <dbReference type="ChEBI" id="CHEBI:60240"/>
    </ligand>
</feature>
<feature type="binding site" evidence="1">
    <location>
        <begin position="110"/>
        <end position="112"/>
    </location>
    <ligand>
        <name>substrate</name>
    </ligand>
</feature>
<feature type="binding site" evidence="1">
    <location>
        <position position="147"/>
    </location>
    <ligand>
        <name>a divalent metal cation</name>
        <dbReference type="ChEBI" id="CHEBI:60240"/>
    </ligand>
</feature>
<feature type="binding site" evidence="1">
    <location>
        <position position="177"/>
    </location>
    <ligand>
        <name>a divalent metal cation</name>
        <dbReference type="ChEBI" id="CHEBI:60240"/>
    </ligand>
</feature>
<feature type="binding site" evidence="1">
    <location>
        <begin position="260"/>
        <end position="262"/>
    </location>
    <ligand>
        <name>substrate</name>
    </ligand>
</feature>
<feature type="site" description="Important for dimerization" evidence="1">
    <location>
        <position position="177"/>
    </location>
</feature>
<protein>
    <recommendedName>
        <fullName evidence="1">Oxygen-dependent coproporphyrinogen-III oxidase</fullName>
        <shortName evidence="1">CPO</shortName>
        <shortName evidence="1">Coprogen oxidase</shortName>
        <shortName evidence="1">Coproporphyrinogenase</shortName>
        <ecNumber evidence="1">1.3.3.3</ecNumber>
    </recommendedName>
</protein>
<name>HEM6_YERPA</name>
<proteinExistence type="inferred from homology"/>
<evidence type="ECO:0000255" key="1">
    <source>
        <dbReference type="HAMAP-Rule" id="MF_00333"/>
    </source>
</evidence>
<organism>
    <name type="scientific">Yersinia pestis bv. Antiqua (strain Antiqua)</name>
    <dbReference type="NCBI Taxonomy" id="360102"/>
    <lineage>
        <taxon>Bacteria</taxon>
        <taxon>Pseudomonadati</taxon>
        <taxon>Pseudomonadota</taxon>
        <taxon>Gammaproteobacteria</taxon>
        <taxon>Enterobacterales</taxon>
        <taxon>Yersiniaceae</taxon>
        <taxon>Yersinia</taxon>
    </lineage>
</organism>
<accession>Q1C5T7</accession>
<gene>
    <name evidence="1" type="primary">hemF</name>
    <name type="ordered locus">YPA_2220</name>
</gene>